<dbReference type="EMBL" id="AM743169">
    <property type="protein sequence ID" value="CAQ45259.1"/>
    <property type="molecule type" value="Genomic_DNA"/>
</dbReference>
<dbReference type="RefSeq" id="WP_004152891.1">
    <property type="nucleotide sequence ID" value="NC_010943.1"/>
</dbReference>
<dbReference type="SMR" id="B2FL26"/>
<dbReference type="EnsemblBacteria" id="CAQ45259">
    <property type="protein sequence ID" value="CAQ45259"/>
    <property type="gene ID" value="Smlt1736"/>
</dbReference>
<dbReference type="GeneID" id="97260645"/>
<dbReference type="KEGG" id="sml:Smlt1736"/>
<dbReference type="eggNOG" id="COG1923">
    <property type="taxonomic scope" value="Bacteria"/>
</dbReference>
<dbReference type="HOGENOM" id="CLU_113688_2_0_6"/>
<dbReference type="Proteomes" id="UP000008840">
    <property type="component" value="Chromosome"/>
</dbReference>
<dbReference type="GO" id="GO:0005829">
    <property type="term" value="C:cytosol"/>
    <property type="evidence" value="ECO:0007669"/>
    <property type="project" value="TreeGrafter"/>
</dbReference>
<dbReference type="GO" id="GO:0003723">
    <property type="term" value="F:RNA binding"/>
    <property type="evidence" value="ECO:0007669"/>
    <property type="project" value="UniProtKB-UniRule"/>
</dbReference>
<dbReference type="GO" id="GO:0006355">
    <property type="term" value="P:regulation of DNA-templated transcription"/>
    <property type="evidence" value="ECO:0007669"/>
    <property type="project" value="InterPro"/>
</dbReference>
<dbReference type="GO" id="GO:0043487">
    <property type="term" value="P:regulation of RNA stability"/>
    <property type="evidence" value="ECO:0007669"/>
    <property type="project" value="TreeGrafter"/>
</dbReference>
<dbReference type="GO" id="GO:0045974">
    <property type="term" value="P:regulation of translation, ncRNA-mediated"/>
    <property type="evidence" value="ECO:0007669"/>
    <property type="project" value="TreeGrafter"/>
</dbReference>
<dbReference type="CDD" id="cd01716">
    <property type="entry name" value="Hfq"/>
    <property type="match status" value="1"/>
</dbReference>
<dbReference type="FunFam" id="2.30.30.100:FF:000001">
    <property type="entry name" value="RNA-binding protein Hfq"/>
    <property type="match status" value="1"/>
</dbReference>
<dbReference type="Gene3D" id="2.30.30.100">
    <property type="match status" value="1"/>
</dbReference>
<dbReference type="HAMAP" id="MF_00436">
    <property type="entry name" value="Hfq"/>
    <property type="match status" value="1"/>
</dbReference>
<dbReference type="InterPro" id="IPR005001">
    <property type="entry name" value="Hfq"/>
</dbReference>
<dbReference type="InterPro" id="IPR010920">
    <property type="entry name" value="LSM_dom_sf"/>
</dbReference>
<dbReference type="InterPro" id="IPR047575">
    <property type="entry name" value="Sm"/>
</dbReference>
<dbReference type="NCBIfam" id="TIGR02383">
    <property type="entry name" value="Hfq"/>
    <property type="match status" value="1"/>
</dbReference>
<dbReference type="NCBIfam" id="NF001602">
    <property type="entry name" value="PRK00395.1"/>
    <property type="match status" value="1"/>
</dbReference>
<dbReference type="PANTHER" id="PTHR34772">
    <property type="entry name" value="RNA-BINDING PROTEIN HFQ"/>
    <property type="match status" value="1"/>
</dbReference>
<dbReference type="PANTHER" id="PTHR34772:SF1">
    <property type="entry name" value="RNA-BINDING PROTEIN HFQ"/>
    <property type="match status" value="1"/>
</dbReference>
<dbReference type="Pfam" id="PF17209">
    <property type="entry name" value="Hfq"/>
    <property type="match status" value="1"/>
</dbReference>
<dbReference type="SUPFAM" id="SSF50182">
    <property type="entry name" value="Sm-like ribonucleoproteins"/>
    <property type="match status" value="1"/>
</dbReference>
<dbReference type="PROSITE" id="PS52002">
    <property type="entry name" value="SM"/>
    <property type="match status" value="1"/>
</dbReference>
<accession>B2FL26</accession>
<keyword id="KW-1185">Reference proteome</keyword>
<keyword id="KW-0694">RNA-binding</keyword>
<keyword id="KW-0346">Stress response</keyword>
<proteinExistence type="inferred from homology"/>
<name>HFQ_STRMK</name>
<reference key="1">
    <citation type="journal article" date="2008" name="Genome Biol.">
        <title>The complete genome, comparative and functional analysis of Stenotrophomonas maltophilia reveals an organism heavily shielded by drug resistance determinants.</title>
        <authorList>
            <person name="Crossman L.C."/>
            <person name="Gould V.C."/>
            <person name="Dow J.M."/>
            <person name="Vernikos G.S."/>
            <person name="Okazaki A."/>
            <person name="Sebaihia M."/>
            <person name="Saunders D."/>
            <person name="Arrowsmith C."/>
            <person name="Carver T."/>
            <person name="Peters N."/>
            <person name="Adlem E."/>
            <person name="Kerhornou A."/>
            <person name="Lord A."/>
            <person name="Murphy L."/>
            <person name="Seeger K."/>
            <person name="Squares R."/>
            <person name="Rutter S."/>
            <person name="Quail M.A."/>
            <person name="Rajandream M.A."/>
            <person name="Harris D."/>
            <person name="Churcher C."/>
            <person name="Bentley S.D."/>
            <person name="Parkhill J."/>
            <person name="Thomson N.R."/>
            <person name="Avison M.B."/>
        </authorList>
    </citation>
    <scope>NUCLEOTIDE SEQUENCE [LARGE SCALE GENOMIC DNA]</scope>
    <source>
        <strain>K279a</strain>
    </source>
</reference>
<gene>
    <name evidence="1" type="primary">hfq</name>
    <name type="ordered locus">Smlt1736</name>
</gene>
<sequence>MSKGQSLQDPFLNALRRERVPVSVYLVNGIKLQGTIESFDQFVVLLRNTVSQMVYKHAISTVVPARNVKVGPGGGYVQSGEGGQAGDEADE</sequence>
<evidence type="ECO:0000255" key="1">
    <source>
        <dbReference type="HAMAP-Rule" id="MF_00436"/>
    </source>
</evidence>
<evidence type="ECO:0000255" key="2">
    <source>
        <dbReference type="PROSITE-ProRule" id="PRU01346"/>
    </source>
</evidence>
<feature type="chain" id="PRO_1000190362" description="RNA-binding protein Hfq">
    <location>
        <begin position="1"/>
        <end position="91"/>
    </location>
</feature>
<feature type="domain" description="Sm" evidence="2">
    <location>
        <begin position="9"/>
        <end position="68"/>
    </location>
</feature>
<organism>
    <name type="scientific">Stenotrophomonas maltophilia (strain K279a)</name>
    <dbReference type="NCBI Taxonomy" id="522373"/>
    <lineage>
        <taxon>Bacteria</taxon>
        <taxon>Pseudomonadati</taxon>
        <taxon>Pseudomonadota</taxon>
        <taxon>Gammaproteobacteria</taxon>
        <taxon>Lysobacterales</taxon>
        <taxon>Lysobacteraceae</taxon>
        <taxon>Stenotrophomonas</taxon>
        <taxon>Stenotrophomonas maltophilia group</taxon>
    </lineage>
</organism>
<protein>
    <recommendedName>
        <fullName evidence="1">RNA-binding protein Hfq</fullName>
    </recommendedName>
</protein>
<comment type="function">
    <text evidence="1">RNA chaperone that binds small regulatory RNA (sRNAs) and mRNAs to facilitate mRNA translational regulation in response to envelope stress, environmental stress and changes in metabolite concentrations. Also binds with high specificity to tRNAs.</text>
</comment>
<comment type="subunit">
    <text evidence="1">Homohexamer.</text>
</comment>
<comment type="similarity">
    <text evidence="1">Belongs to the Hfq family.</text>
</comment>